<sequence length="357" mass="39731">MKKTVKALAAYQAELPVETVKAKYGLQHLARLSANESVYGPSPKVAQAVRAVSDDILGYYPDGQATELREAVAKLNHVDPQHLVFGAGADELIELLTRVVLEPGSNIIIPNPTFGEYAMHAQIEQSTTKKIPVNVDNGNVDFDAILDAIDDKTAMVWIANPNNPTGVFETTSSIKRFLDKLPANITLVVDEAYYDFVDEPDATVAPLVAEYTNLVVLRTLSKAYGLANLRVGYGIMQDPLYSAMQAVRLPYNLSTYQIAGGTAAVLDQEYLQKNVQRFQVERQKFQDFLTKNKFKFYESQANFIWIKVGETKKVGQKLLEQGFQVNDRLNPEWIRIALGTPEDNAELKLAFLKATNK</sequence>
<protein>
    <recommendedName>
        <fullName evidence="1">Histidinol-phosphate aminotransferase</fullName>
        <ecNumber evidence="1">2.6.1.9</ecNumber>
    </recommendedName>
    <alternativeName>
        <fullName evidence="1">Imidazole acetol-phosphate transaminase</fullName>
    </alternativeName>
</protein>
<gene>
    <name evidence="1" type="primary">hisC</name>
    <name type="ordered locus">LEUM_1547</name>
</gene>
<name>HIS8_LEUMM</name>
<evidence type="ECO:0000255" key="1">
    <source>
        <dbReference type="HAMAP-Rule" id="MF_01023"/>
    </source>
</evidence>
<comment type="catalytic activity">
    <reaction evidence="1">
        <text>L-histidinol phosphate + 2-oxoglutarate = 3-(imidazol-4-yl)-2-oxopropyl phosphate + L-glutamate</text>
        <dbReference type="Rhea" id="RHEA:23744"/>
        <dbReference type="ChEBI" id="CHEBI:16810"/>
        <dbReference type="ChEBI" id="CHEBI:29985"/>
        <dbReference type="ChEBI" id="CHEBI:57766"/>
        <dbReference type="ChEBI" id="CHEBI:57980"/>
        <dbReference type="EC" id="2.6.1.9"/>
    </reaction>
</comment>
<comment type="cofactor">
    <cofactor evidence="1">
        <name>pyridoxal 5'-phosphate</name>
        <dbReference type="ChEBI" id="CHEBI:597326"/>
    </cofactor>
</comment>
<comment type="pathway">
    <text evidence="1">Amino-acid biosynthesis; L-histidine biosynthesis; L-histidine from 5-phospho-alpha-D-ribose 1-diphosphate: step 7/9.</text>
</comment>
<comment type="subunit">
    <text evidence="1">Homodimer.</text>
</comment>
<comment type="similarity">
    <text evidence="1">Belongs to the class-II pyridoxal-phosphate-dependent aminotransferase family. Histidinol-phosphate aminotransferase subfamily.</text>
</comment>
<keyword id="KW-0028">Amino-acid biosynthesis</keyword>
<keyword id="KW-0032">Aminotransferase</keyword>
<keyword id="KW-0368">Histidine biosynthesis</keyword>
<keyword id="KW-0663">Pyridoxal phosphate</keyword>
<keyword id="KW-1185">Reference proteome</keyword>
<keyword id="KW-0808">Transferase</keyword>
<feature type="chain" id="PRO_0000319770" description="Histidinol-phosphate aminotransferase">
    <location>
        <begin position="1"/>
        <end position="357"/>
    </location>
</feature>
<feature type="modified residue" description="N6-(pyridoxal phosphate)lysine" evidence="1">
    <location>
        <position position="222"/>
    </location>
</feature>
<reference key="1">
    <citation type="journal article" date="2006" name="Proc. Natl. Acad. Sci. U.S.A.">
        <title>Comparative genomics of the lactic acid bacteria.</title>
        <authorList>
            <person name="Makarova K.S."/>
            <person name="Slesarev A."/>
            <person name="Wolf Y.I."/>
            <person name="Sorokin A."/>
            <person name="Mirkin B."/>
            <person name="Koonin E.V."/>
            <person name="Pavlov A."/>
            <person name="Pavlova N."/>
            <person name="Karamychev V."/>
            <person name="Polouchine N."/>
            <person name="Shakhova V."/>
            <person name="Grigoriev I."/>
            <person name="Lou Y."/>
            <person name="Rohksar D."/>
            <person name="Lucas S."/>
            <person name="Huang K."/>
            <person name="Goodstein D.M."/>
            <person name="Hawkins T."/>
            <person name="Plengvidhya V."/>
            <person name="Welker D."/>
            <person name="Hughes J."/>
            <person name="Goh Y."/>
            <person name="Benson A."/>
            <person name="Baldwin K."/>
            <person name="Lee J.-H."/>
            <person name="Diaz-Muniz I."/>
            <person name="Dosti B."/>
            <person name="Smeianov V."/>
            <person name="Wechter W."/>
            <person name="Barabote R."/>
            <person name="Lorca G."/>
            <person name="Altermann E."/>
            <person name="Barrangou R."/>
            <person name="Ganesan B."/>
            <person name="Xie Y."/>
            <person name="Rawsthorne H."/>
            <person name="Tamir D."/>
            <person name="Parker C."/>
            <person name="Breidt F."/>
            <person name="Broadbent J.R."/>
            <person name="Hutkins R."/>
            <person name="O'Sullivan D."/>
            <person name="Steele J."/>
            <person name="Unlu G."/>
            <person name="Saier M.H. Jr."/>
            <person name="Klaenhammer T."/>
            <person name="Richardson P."/>
            <person name="Kozyavkin S."/>
            <person name="Weimer B.C."/>
            <person name="Mills D.A."/>
        </authorList>
    </citation>
    <scope>NUCLEOTIDE SEQUENCE [LARGE SCALE GENOMIC DNA]</scope>
    <source>
        <strain>ATCC 8293 / DSM 20343 / BCRC 11652 / CCM 1803 / JCM 6124 / NCDO 523 / NBRC 100496 / NCIMB 8023 / NCTC 12954 / NRRL B-1118 / 37Y</strain>
    </source>
</reference>
<dbReference type="EC" id="2.6.1.9" evidence="1"/>
<dbReference type="EMBL" id="CP000414">
    <property type="protein sequence ID" value="ABJ62639.1"/>
    <property type="molecule type" value="Genomic_DNA"/>
</dbReference>
<dbReference type="RefSeq" id="WP_011680213.1">
    <property type="nucleotide sequence ID" value="NC_008531.1"/>
</dbReference>
<dbReference type="SMR" id="Q03VY3"/>
<dbReference type="EnsemblBacteria" id="ABJ62639">
    <property type="protein sequence ID" value="ABJ62639"/>
    <property type="gene ID" value="LEUM_1547"/>
</dbReference>
<dbReference type="GeneID" id="29577436"/>
<dbReference type="KEGG" id="lme:LEUM_1547"/>
<dbReference type="eggNOG" id="COG0079">
    <property type="taxonomic scope" value="Bacteria"/>
</dbReference>
<dbReference type="HOGENOM" id="CLU_017584_3_3_9"/>
<dbReference type="UniPathway" id="UPA00031">
    <property type="reaction ID" value="UER00012"/>
</dbReference>
<dbReference type="Proteomes" id="UP000000362">
    <property type="component" value="Chromosome"/>
</dbReference>
<dbReference type="GO" id="GO:0004400">
    <property type="term" value="F:histidinol-phosphate transaminase activity"/>
    <property type="evidence" value="ECO:0007669"/>
    <property type="project" value="UniProtKB-UniRule"/>
</dbReference>
<dbReference type="GO" id="GO:0030170">
    <property type="term" value="F:pyridoxal phosphate binding"/>
    <property type="evidence" value="ECO:0007669"/>
    <property type="project" value="InterPro"/>
</dbReference>
<dbReference type="GO" id="GO:0000105">
    <property type="term" value="P:L-histidine biosynthetic process"/>
    <property type="evidence" value="ECO:0007669"/>
    <property type="project" value="UniProtKB-UniRule"/>
</dbReference>
<dbReference type="CDD" id="cd00609">
    <property type="entry name" value="AAT_like"/>
    <property type="match status" value="1"/>
</dbReference>
<dbReference type="Gene3D" id="3.90.1150.10">
    <property type="entry name" value="Aspartate Aminotransferase, domain 1"/>
    <property type="match status" value="1"/>
</dbReference>
<dbReference type="Gene3D" id="3.40.640.10">
    <property type="entry name" value="Type I PLP-dependent aspartate aminotransferase-like (Major domain)"/>
    <property type="match status" value="1"/>
</dbReference>
<dbReference type="HAMAP" id="MF_01023">
    <property type="entry name" value="HisC_aminotrans_2"/>
    <property type="match status" value="1"/>
</dbReference>
<dbReference type="InterPro" id="IPR004839">
    <property type="entry name" value="Aminotransferase_I/II_large"/>
</dbReference>
<dbReference type="InterPro" id="IPR005861">
    <property type="entry name" value="HisP_aminotrans"/>
</dbReference>
<dbReference type="InterPro" id="IPR050106">
    <property type="entry name" value="HistidinolP_aminotransfase"/>
</dbReference>
<dbReference type="InterPro" id="IPR015424">
    <property type="entry name" value="PyrdxlP-dep_Trfase"/>
</dbReference>
<dbReference type="InterPro" id="IPR015421">
    <property type="entry name" value="PyrdxlP-dep_Trfase_major"/>
</dbReference>
<dbReference type="InterPro" id="IPR015422">
    <property type="entry name" value="PyrdxlP-dep_Trfase_small"/>
</dbReference>
<dbReference type="NCBIfam" id="TIGR01141">
    <property type="entry name" value="hisC"/>
    <property type="match status" value="1"/>
</dbReference>
<dbReference type="PANTHER" id="PTHR43643:SF3">
    <property type="entry name" value="HISTIDINOL-PHOSPHATE AMINOTRANSFERASE"/>
    <property type="match status" value="1"/>
</dbReference>
<dbReference type="PANTHER" id="PTHR43643">
    <property type="entry name" value="HISTIDINOL-PHOSPHATE AMINOTRANSFERASE 2"/>
    <property type="match status" value="1"/>
</dbReference>
<dbReference type="Pfam" id="PF00155">
    <property type="entry name" value="Aminotran_1_2"/>
    <property type="match status" value="1"/>
</dbReference>
<dbReference type="SUPFAM" id="SSF53383">
    <property type="entry name" value="PLP-dependent transferases"/>
    <property type="match status" value="1"/>
</dbReference>
<organism>
    <name type="scientific">Leuconostoc mesenteroides subsp. mesenteroides (strain ATCC 8293 / DSM 20343 / BCRC 11652 / CCM 1803 / JCM 6124 / NCDO 523 / NBRC 100496 / NCIMB 8023 / NCTC 12954 / NRRL B-1118 / 37Y)</name>
    <dbReference type="NCBI Taxonomy" id="203120"/>
    <lineage>
        <taxon>Bacteria</taxon>
        <taxon>Bacillati</taxon>
        <taxon>Bacillota</taxon>
        <taxon>Bacilli</taxon>
        <taxon>Lactobacillales</taxon>
        <taxon>Lactobacillaceae</taxon>
        <taxon>Leuconostoc</taxon>
    </lineage>
</organism>
<proteinExistence type="inferred from homology"/>
<accession>Q03VY3</accession>